<gene>
    <name type="primary">GASA7</name>
    <name type="ordered locus">At2g14900</name>
    <name type="ORF">T26I20.6</name>
</gene>
<proteinExistence type="inferred from homology"/>
<dbReference type="EMBL" id="AC005396">
    <property type="protein sequence ID" value="AAC61287.1"/>
    <property type="molecule type" value="Genomic_DNA"/>
</dbReference>
<dbReference type="EMBL" id="CP002685">
    <property type="protein sequence ID" value="AEC06348.1"/>
    <property type="molecule type" value="Genomic_DNA"/>
</dbReference>
<dbReference type="EMBL" id="BT002904">
    <property type="protein sequence ID" value="AAO22720.1"/>
    <property type="molecule type" value="mRNA"/>
</dbReference>
<dbReference type="EMBL" id="BT004423">
    <property type="protein sequence ID" value="AAO42417.1"/>
    <property type="molecule type" value="mRNA"/>
</dbReference>
<dbReference type="PIR" id="G84522">
    <property type="entry name" value="G84522"/>
</dbReference>
<dbReference type="RefSeq" id="NP_179096.1">
    <property type="nucleotide sequence ID" value="NM_127054.5"/>
</dbReference>
<dbReference type="SMR" id="O82328"/>
<dbReference type="FunCoup" id="O82328">
    <property type="interactions" value="2"/>
</dbReference>
<dbReference type="STRING" id="3702.O82328"/>
<dbReference type="PaxDb" id="3702-AT2G14900.1"/>
<dbReference type="ProteomicsDB" id="230009"/>
<dbReference type="EnsemblPlants" id="AT2G14900.1">
    <property type="protein sequence ID" value="AT2G14900.1"/>
    <property type="gene ID" value="AT2G14900"/>
</dbReference>
<dbReference type="GeneID" id="815979"/>
<dbReference type="Gramene" id="AT2G14900.1">
    <property type="protein sequence ID" value="AT2G14900.1"/>
    <property type="gene ID" value="AT2G14900"/>
</dbReference>
<dbReference type="KEGG" id="ath:AT2G14900"/>
<dbReference type="Araport" id="AT2G14900"/>
<dbReference type="TAIR" id="AT2G14900"/>
<dbReference type="eggNOG" id="ENOG502S46W">
    <property type="taxonomic scope" value="Eukaryota"/>
</dbReference>
<dbReference type="HOGENOM" id="CLU_142643_1_1_1"/>
<dbReference type="InParanoid" id="O82328"/>
<dbReference type="OMA" id="QKCEGRC"/>
<dbReference type="OrthoDB" id="847210at2759"/>
<dbReference type="PhylomeDB" id="O82328"/>
<dbReference type="PRO" id="PR:O82328"/>
<dbReference type="Proteomes" id="UP000006548">
    <property type="component" value="Chromosome 2"/>
</dbReference>
<dbReference type="ExpressionAtlas" id="O82328">
    <property type="expression patterns" value="baseline and differential"/>
</dbReference>
<dbReference type="GO" id="GO:0005576">
    <property type="term" value="C:extracellular region"/>
    <property type="evidence" value="ECO:0007669"/>
    <property type="project" value="UniProtKB-SubCell"/>
</dbReference>
<dbReference type="GO" id="GO:0009740">
    <property type="term" value="P:gibberellic acid mediated signaling pathway"/>
    <property type="evidence" value="ECO:0007669"/>
    <property type="project" value="UniProtKB-KW"/>
</dbReference>
<dbReference type="InterPro" id="IPR003854">
    <property type="entry name" value="GASA"/>
</dbReference>
<dbReference type="PANTHER" id="PTHR23201">
    <property type="entry name" value="EXTENSIN, PROLINE-RICH PROTEIN"/>
    <property type="match status" value="1"/>
</dbReference>
<dbReference type="PANTHER" id="PTHR23201:SF131">
    <property type="entry name" value="GIBBERELLIN-REGULATED PROTEIN 7"/>
    <property type="match status" value="1"/>
</dbReference>
<dbReference type="Pfam" id="PF02704">
    <property type="entry name" value="GASA"/>
    <property type="match status" value="1"/>
</dbReference>
<reference key="1">
    <citation type="journal article" date="1999" name="Nature">
        <title>Sequence and analysis of chromosome 2 of the plant Arabidopsis thaliana.</title>
        <authorList>
            <person name="Lin X."/>
            <person name="Kaul S."/>
            <person name="Rounsley S.D."/>
            <person name="Shea T.P."/>
            <person name="Benito M.-I."/>
            <person name="Town C.D."/>
            <person name="Fujii C.Y."/>
            <person name="Mason T.M."/>
            <person name="Bowman C.L."/>
            <person name="Barnstead M.E."/>
            <person name="Feldblyum T.V."/>
            <person name="Buell C.R."/>
            <person name="Ketchum K.A."/>
            <person name="Lee J.J."/>
            <person name="Ronning C.M."/>
            <person name="Koo H.L."/>
            <person name="Moffat K.S."/>
            <person name="Cronin L.A."/>
            <person name="Shen M."/>
            <person name="Pai G."/>
            <person name="Van Aken S."/>
            <person name="Umayam L."/>
            <person name="Tallon L.J."/>
            <person name="Gill J.E."/>
            <person name="Adams M.D."/>
            <person name="Carrera A.J."/>
            <person name="Creasy T.H."/>
            <person name="Goodman H.M."/>
            <person name="Somerville C.R."/>
            <person name="Copenhaver G.P."/>
            <person name="Preuss D."/>
            <person name="Nierman W.C."/>
            <person name="White O."/>
            <person name="Eisen J.A."/>
            <person name="Salzberg S.L."/>
            <person name="Fraser C.M."/>
            <person name="Venter J.C."/>
        </authorList>
    </citation>
    <scope>NUCLEOTIDE SEQUENCE [LARGE SCALE GENOMIC DNA]</scope>
    <source>
        <strain>cv. Columbia</strain>
    </source>
</reference>
<reference key="2">
    <citation type="journal article" date="2017" name="Plant J.">
        <title>Araport11: a complete reannotation of the Arabidopsis thaliana reference genome.</title>
        <authorList>
            <person name="Cheng C.Y."/>
            <person name="Krishnakumar V."/>
            <person name="Chan A.P."/>
            <person name="Thibaud-Nissen F."/>
            <person name="Schobel S."/>
            <person name="Town C.D."/>
        </authorList>
    </citation>
    <scope>GENOME REANNOTATION</scope>
    <source>
        <strain>cv. Columbia</strain>
    </source>
</reference>
<reference key="3">
    <citation type="journal article" date="2003" name="Science">
        <title>Empirical analysis of transcriptional activity in the Arabidopsis genome.</title>
        <authorList>
            <person name="Yamada K."/>
            <person name="Lim J."/>
            <person name="Dale J.M."/>
            <person name="Chen H."/>
            <person name="Shinn P."/>
            <person name="Palm C.J."/>
            <person name="Southwick A.M."/>
            <person name="Wu H.C."/>
            <person name="Kim C.J."/>
            <person name="Nguyen M."/>
            <person name="Pham P.K."/>
            <person name="Cheuk R.F."/>
            <person name="Karlin-Newmann G."/>
            <person name="Liu S.X."/>
            <person name="Lam B."/>
            <person name="Sakano H."/>
            <person name="Wu T."/>
            <person name="Yu G."/>
            <person name="Miranda M."/>
            <person name="Quach H.L."/>
            <person name="Tripp M."/>
            <person name="Chang C.H."/>
            <person name="Lee J.M."/>
            <person name="Toriumi M.J."/>
            <person name="Chan M.M."/>
            <person name="Tang C.C."/>
            <person name="Onodera C.S."/>
            <person name="Deng J.M."/>
            <person name="Akiyama K."/>
            <person name="Ansari Y."/>
            <person name="Arakawa T."/>
            <person name="Banh J."/>
            <person name="Banno F."/>
            <person name="Bowser L."/>
            <person name="Brooks S.Y."/>
            <person name="Carninci P."/>
            <person name="Chao Q."/>
            <person name="Choy N."/>
            <person name="Enju A."/>
            <person name="Goldsmith A.D."/>
            <person name="Gurjal M."/>
            <person name="Hansen N.F."/>
            <person name="Hayashizaki Y."/>
            <person name="Johnson-Hopson C."/>
            <person name="Hsuan V.W."/>
            <person name="Iida K."/>
            <person name="Karnes M."/>
            <person name="Khan S."/>
            <person name="Koesema E."/>
            <person name="Ishida J."/>
            <person name="Jiang P.X."/>
            <person name="Jones T."/>
            <person name="Kawai J."/>
            <person name="Kamiya A."/>
            <person name="Meyers C."/>
            <person name="Nakajima M."/>
            <person name="Narusaka M."/>
            <person name="Seki M."/>
            <person name="Sakurai T."/>
            <person name="Satou M."/>
            <person name="Tamse R."/>
            <person name="Vaysberg M."/>
            <person name="Wallender E.K."/>
            <person name="Wong C."/>
            <person name="Yamamura Y."/>
            <person name="Yuan S."/>
            <person name="Shinozaki K."/>
            <person name="Davis R.W."/>
            <person name="Theologis A."/>
            <person name="Ecker J.R."/>
        </authorList>
    </citation>
    <scope>NUCLEOTIDE SEQUENCE [LARGE SCALE MRNA]</scope>
    <source>
        <strain>cv. Columbia</strain>
    </source>
</reference>
<evidence type="ECO:0000250" key="1"/>
<evidence type="ECO:0000255" key="2"/>
<evidence type="ECO:0000305" key="3"/>
<organism>
    <name type="scientific">Arabidopsis thaliana</name>
    <name type="common">Mouse-ear cress</name>
    <dbReference type="NCBI Taxonomy" id="3702"/>
    <lineage>
        <taxon>Eukaryota</taxon>
        <taxon>Viridiplantae</taxon>
        <taxon>Streptophyta</taxon>
        <taxon>Embryophyta</taxon>
        <taxon>Tracheophyta</taxon>
        <taxon>Spermatophyta</taxon>
        <taxon>Magnoliopsida</taxon>
        <taxon>eudicotyledons</taxon>
        <taxon>Gunneridae</taxon>
        <taxon>Pentapetalae</taxon>
        <taxon>rosids</taxon>
        <taxon>malvids</taxon>
        <taxon>Brassicales</taxon>
        <taxon>Brassicaceae</taxon>
        <taxon>Camelineae</taxon>
        <taxon>Arabidopsis</taxon>
    </lineage>
</organism>
<keyword id="KW-1015">Disulfide bond</keyword>
<keyword id="KW-0939">Gibberellin signaling pathway</keyword>
<keyword id="KW-1185">Reference proteome</keyword>
<keyword id="KW-0964">Secreted</keyword>
<keyword id="KW-0732">Signal</keyword>
<feature type="signal peptide" evidence="2">
    <location>
        <begin position="1"/>
        <end position="23"/>
    </location>
</feature>
<feature type="chain" id="PRO_0000413705" description="Gibberellin-regulated protein 7">
    <location>
        <begin position="24"/>
        <end position="108"/>
    </location>
</feature>
<comment type="function">
    <text evidence="1">Gibberellin-regulated protein that may function in hormonal controlled steps of development such as seed germination, flowering and seed maturation.</text>
</comment>
<comment type="subcellular location">
    <subcellularLocation>
        <location evidence="1">Secreted</location>
    </subcellularLocation>
</comment>
<comment type="PTM">
    <text evidence="1">Six disulfide bonds may be present.</text>
</comment>
<comment type="similarity">
    <text evidence="3">Belongs to the GASA family.</text>
</comment>
<protein>
    <recommendedName>
        <fullName>Gibberellin-regulated protein 7</fullName>
    </recommendedName>
    <alternativeName>
        <fullName>GAST1 protein homolog 7</fullName>
    </alternativeName>
</protein>
<accession>O82328</accession>
<sequence length="108" mass="11381">MKIIVSILVLASLLLISSSLASATISDAFGSGAVAPAPQSKDGPALEKWCGQKCEGRCKEAGMKDRCLKYCGICCKDCQCVPSGTYGNKHECACYRDKLSSKGTPKCP</sequence>
<name>GASA7_ARATH</name>